<feature type="chain" id="PRO_0000185039" description="5-oxoprolinase subunit A">
    <location>
        <begin position="1"/>
        <end position="244"/>
    </location>
</feature>
<comment type="function">
    <text evidence="1">Catalyzes the cleavage of 5-oxoproline to form L-glutamate coupled to the hydrolysis of ATP to ADP and inorganic phosphate.</text>
</comment>
<comment type="catalytic activity">
    <reaction evidence="1">
        <text>5-oxo-L-proline + ATP + 2 H2O = L-glutamate + ADP + phosphate + H(+)</text>
        <dbReference type="Rhea" id="RHEA:10348"/>
        <dbReference type="ChEBI" id="CHEBI:15377"/>
        <dbReference type="ChEBI" id="CHEBI:15378"/>
        <dbReference type="ChEBI" id="CHEBI:29985"/>
        <dbReference type="ChEBI" id="CHEBI:30616"/>
        <dbReference type="ChEBI" id="CHEBI:43474"/>
        <dbReference type="ChEBI" id="CHEBI:58402"/>
        <dbReference type="ChEBI" id="CHEBI:456216"/>
        <dbReference type="EC" id="3.5.2.9"/>
    </reaction>
</comment>
<comment type="subunit">
    <text evidence="1">Forms a complex composed of PxpA, PxpB and PxpC.</text>
</comment>
<comment type="similarity">
    <text evidence="1">Belongs to the LamB/PxpA family.</text>
</comment>
<dbReference type="EC" id="3.5.2.9" evidence="1"/>
<dbReference type="EMBL" id="AL513382">
    <property type="protein sequence ID" value="CAD05176.1"/>
    <property type="molecule type" value="Genomic_DNA"/>
</dbReference>
<dbReference type="EMBL" id="AE014613">
    <property type="protein sequence ID" value="AAO69773.1"/>
    <property type="molecule type" value="Genomic_DNA"/>
</dbReference>
<dbReference type="RefSeq" id="NP_455273.1">
    <property type="nucleotide sequence ID" value="NC_003198.1"/>
</dbReference>
<dbReference type="RefSeq" id="WP_001017910.1">
    <property type="nucleotide sequence ID" value="NZ_WSUR01000015.1"/>
</dbReference>
<dbReference type="SMR" id="Q8Z8D9"/>
<dbReference type="STRING" id="220341.gene:17584763"/>
<dbReference type="KEGG" id="stt:t2162"/>
<dbReference type="KEGG" id="sty:STY0754"/>
<dbReference type="PATRIC" id="fig|220341.7.peg.762"/>
<dbReference type="eggNOG" id="COG1540">
    <property type="taxonomic scope" value="Bacteria"/>
</dbReference>
<dbReference type="HOGENOM" id="CLU_069535_0_0_6"/>
<dbReference type="OMA" id="VCIHGDT"/>
<dbReference type="OrthoDB" id="9773478at2"/>
<dbReference type="Proteomes" id="UP000000541">
    <property type="component" value="Chromosome"/>
</dbReference>
<dbReference type="Proteomes" id="UP000002670">
    <property type="component" value="Chromosome"/>
</dbReference>
<dbReference type="GO" id="GO:0017168">
    <property type="term" value="F:5-oxoprolinase (ATP-hydrolyzing) activity"/>
    <property type="evidence" value="ECO:0007669"/>
    <property type="project" value="UniProtKB-UniRule"/>
</dbReference>
<dbReference type="GO" id="GO:0005524">
    <property type="term" value="F:ATP binding"/>
    <property type="evidence" value="ECO:0007669"/>
    <property type="project" value="UniProtKB-UniRule"/>
</dbReference>
<dbReference type="GO" id="GO:0005975">
    <property type="term" value="P:carbohydrate metabolic process"/>
    <property type="evidence" value="ECO:0007669"/>
    <property type="project" value="InterPro"/>
</dbReference>
<dbReference type="CDD" id="cd10800">
    <property type="entry name" value="LamB_YcsF_YbgL_like"/>
    <property type="match status" value="1"/>
</dbReference>
<dbReference type="Gene3D" id="3.20.20.370">
    <property type="entry name" value="Glycoside hydrolase/deacetylase"/>
    <property type="match status" value="1"/>
</dbReference>
<dbReference type="HAMAP" id="MF_00691">
    <property type="entry name" value="PxpA"/>
    <property type="match status" value="1"/>
</dbReference>
<dbReference type="InterPro" id="IPR011330">
    <property type="entry name" value="Glyco_hydro/deAcase_b/a-brl"/>
</dbReference>
<dbReference type="InterPro" id="IPR005501">
    <property type="entry name" value="LamB/YcsF/PxpA-like"/>
</dbReference>
<dbReference type="NCBIfam" id="NF003812">
    <property type="entry name" value="PRK05406.1-1"/>
    <property type="match status" value="1"/>
</dbReference>
<dbReference type="NCBIfam" id="NF003814">
    <property type="entry name" value="PRK05406.1-3"/>
    <property type="match status" value="1"/>
</dbReference>
<dbReference type="NCBIfam" id="NF003815">
    <property type="entry name" value="PRK05406.1-4"/>
    <property type="match status" value="1"/>
</dbReference>
<dbReference type="NCBIfam" id="NF003816">
    <property type="entry name" value="PRK05406.1-5"/>
    <property type="match status" value="1"/>
</dbReference>
<dbReference type="PANTHER" id="PTHR30292:SF0">
    <property type="entry name" value="5-OXOPROLINASE SUBUNIT A"/>
    <property type="match status" value="1"/>
</dbReference>
<dbReference type="PANTHER" id="PTHR30292">
    <property type="entry name" value="UNCHARACTERIZED PROTEIN YBGL-RELATED"/>
    <property type="match status" value="1"/>
</dbReference>
<dbReference type="Pfam" id="PF03746">
    <property type="entry name" value="LamB_YcsF"/>
    <property type="match status" value="1"/>
</dbReference>
<dbReference type="SUPFAM" id="SSF88713">
    <property type="entry name" value="Glycoside hydrolase/deacetylase"/>
    <property type="match status" value="1"/>
</dbReference>
<accession>Q8Z8D9</accession>
<protein>
    <recommendedName>
        <fullName evidence="1">5-oxoprolinase subunit A</fullName>
        <shortName evidence="1">5-OPase subunit A</shortName>
        <ecNumber evidence="1">3.5.2.9</ecNumber>
    </recommendedName>
    <alternativeName>
        <fullName evidence="1">5-oxoprolinase (ATP-hydrolyzing) subunit A</fullName>
    </alternativeName>
</protein>
<evidence type="ECO:0000255" key="1">
    <source>
        <dbReference type="HAMAP-Rule" id="MF_00691"/>
    </source>
</evidence>
<organism>
    <name type="scientific">Salmonella typhi</name>
    <dbReference type="NCBI Taxonomy" id="90370"/>
    <lineage>
        <taxon>Bacteria</taxon>
        <taxon>Pseudomonadati</taxon>
        <taxon>Pseudomonadota</taxon>
        <taxon>Gammaproteobacteria</taxon>
        <taxon>Enterobacterales</taxon>
        <taxon>Enterobacteriaceae</taxon>
        <taxon>Salmonella</taxon>
    </lineage>
</organism>
<keyword id="KW-0067">ATP-binding</keyword>
<keyword id="KW-0378">Hydrolase</keyword>
<keyword id="KW-0547">Nucleotide-binding</keyword>
<reference key="1">
    <citation type="journal article" date="2001" name="Nature">
        <title>Complete genome sequence of a multiple drug resistant Salmonella enterica serovar Typhi CT18.</title>
        <authorList>
            <person name="Parkhill J."/>
            <person name="Dougan G."/>
            <person name="James K.D."/>
            <person name="Thomson N.R."/>
            <person name="Pickard D."/>
            <person name="Wain J."/>
            <person name="Churcher C.M."/>
            <person name="Mungall K.L."/>
            <person name="Bentley S.D."/>
            <person name="Holden M.T.G."/>
            <person name="Sebaihia M."/>
            <person name="Baker S."/>
            <person name="Basham D."/>
            <person name="Brooks K."/>
            <person name="Chillingworth T."/>
            <person name="Connerton P."/>
            <person name="Cronin A."/>
            <person name="Davis P."/>
            <person name="Davies R.M."/>
            <person name="Dowd L."/>
            <person name="White N."/>
            <person name="Farrar J."/>
            <person name="Feltwell T."/>
            <person name="Hamlin N."/>
            <person name="Haque A."/>
            <person name="Hien T.T."/>
            <person name="Holroyd S."/>
            <person name="Jagels K."/>
            <person name="Krogh A."/>
            <person name="Larsen T.S."/>
            <person name="Leather S."/>
            <person name="Moule S."/>
            <person name="O'Gaora P."/>
            <person name="Parry C."/>
            <person name="Quail M.A."/>
            <person name="Rutherford K.M."/>
            <person name="Simmonds M."/>
            <person name="Skelton J."/>
            <person name="Stevens K."/>
            <person name="Whitehead S."/>
            <person name="Barrell B.G."/>
        </authorList>
    </citation>
    <scope>NUCLEOTIDE SEQUENCE [LARGE SCALE GENOMIC DNA]</scope>
    <source>
        <strain>CT18</strain>
    </source>
</reference>
<reference key="2">
    <citation type="journal article" date="2003" name="J. Bacteriol.">
        <title>Comparative genomics of Salmonella enterica serovar Typhi strains Ty2 and CT18.</title>
        <authorList>
            <person name="Deng W."/>
            <person name="Liou S.-R."/>
            <person name="Plunkett G. III"/>
            <person name="Mayhew G.F."/>
            <person name="Rose D.J."/>
            <person name="Burland V."/>
            <person name="Kodoyianni V."/>
            <person name="Schwartz D.C."/>
            <person name="Blattner F.R."/>
        </authorList>
    </citation>
    <scope>NUCLEOTIDE SEQUENCE [LARGE SCALE GENOMIC DNA]</scope>
    <source>
        <strain>ATCC 700931 / Ty2</strain>
    </source>
</reference>
<name>PXPA_SALTI</name>
<proteinExistence type="inferred from homology"/>
<gene>
    <name evidence="1" type="primary">pxpA</name>
    <name type="synonym">ybgL</name>
    <name type="ordered locus">STY0754</name>
    <name type="ordered locus">t2162</name>
</gene>
<sequence length="244" mass="26077">MNIDLNADLGEGCASDSELLTLVSSANIACGFHAGDAQTMLTCVREALKNGVAIGAHPSFPDRDNFGRTAMVLPPETVYAQTLYQIGALGAIVQAQGGVMRHVKPHGMLYNQAAKDPHLAQAIAKAVHDYDPSLILVGLAGSELIRAGERHRLVTRQEVFADRGYQADGSLVPRMQPGALIHDEEQALAQTLDMVQAGRVKSVTGVWTTVTAQTVCIHGDGEYALAFARRLRAAFNARNVHVIA</sequence>